<gene>
    <name evidence="1" type="primary">tig</name>
    <name type="ordered locus">Shewmr4_2496</name>
</gene>
<organism>
    <name type="scientific">Shewanella sp. (strain MR-4)</name>
    <dbReference type="NCBI Taxonomy" id="60480"/>
    <lineage>
        <taxon>Bacteria</taxon>
        <taxon>Pseudomonadati</taxon>
        <taxon>Pseudomonadota</taxon>
        <taxon>Gammaproteobacteria</taxon>
        <taxon>Alteromonadales</taxon>
        <taxon>Shewanellaceae</taxon>
        <taxon>Shewanella</taxon>
    </lineage>
</organism>
<sequence length="434" mass="47627">MQVSVEATQGLERRLTISVPAEQIEKLVKDSLQREAKRARIPGFRPGKVPVTVINKRYGAAIRQDITGEVMQRNFIEAIIAEKLNPAGAPTFVPGATDGEKFEFVATFEIYPEVELKGLDAIEVEQPKASVTDADVDSMIETLRKQHATFAAVEREAADGDKVKMNFVGSVDGVEFEGGKADDFELQLGSGRMIPGFEAGILGHKAGEEFVIDVTFPEEYHAENLKGKAAKFAITLTEVLAANLPEVNDEFAALFGISEGGLEALKTEIRKNMNRELEQALKANVKEQVINGLLANNDIELPKALIDGEVNVLRQQAMQRFGGQTANMPELPAELFTEQAARRVKIGLLLGEVIKTNELKAEDERVQALIASMASAYEDPSEVVAYYNSNKELMQNMRNVALEEQAVEALLKSAKVTEKEVAFEEFMNKATGRA</sequence>
<name>TIG_SHESM</name>
<protein>
    <recommendedName>
        <fullName evidence="1">Trigger factor</fullName>
        <shortName evidence="1">TF</shortName>
        <ecNumber evidence="1">5.2.1.8</ecNumber>
    </recommendedName>
    <alternativeName>
        <fullName evidence="1">PPIase</fullName>
    </alternativeName>
</protein>
<comment type="function">
    <text evidence="1">Involved in protein export. Acts as a chaperone by maintaining the newly synthesized protein in an open conformation. Functions as a peptidyl-prolyl cis-trans isomerase.</text>
</comment>
<comment type="catalytic activity">
    <reaction evidence="1">
        <text>[protein]-peptidylproline (omega=180) = [protein]-peptidylproline (omega=0)</text>
        <dbReference type="Rhea" id="RHEA:16237"/>
        <dbReference type="Rhea" id="RHEA-COMP:10747"/>
        <dbReference type="Rhea" id="RHEA-COMP:10748"/>
        <dbReference type="ChEBI" id="CHEBI:83833"/>
        <dbReference type="ChEBI" id="CHEBI:83834"/>
        <dbReference type="EC" id="5.2.1.8"/>
    </reaction>
</comment>
<comment type="subcellular location">
    <subcellularLocation>
        <location>Cytoplasm</location>
    </subcellularLocation>
    <text evidence="1">About half TF is bound to the ribosome near the polypeptide exit tunnel while the other half is free in the cytoplasm.</text>
</comment>
<comment type="domain">
    <text evidence="1">Consists of 3 domains; the N-terminus binds the ribosome, the middle domain has PPIase activity, while the C-terminus has intrinsic chaperone activity on its own.</text>
</comment>
<comment type="similarity">
    <text evidence="1">Belongs to the FKBP-type PPIase family. Tig subfamily.</text>
</comment>
<keyword id="KW-0131">Cell cycle</keyword>
<keyword id="KW-0132">Cell division</keyword>
<keyword id="KW-0143">Chaperone</keyword>
<keyword id="KW-0963">Cytoplasm</keyword>
<keyword id="KW-0413">Isomerase</keyword>
<keyword id="KW-0697">Rotamase</keyword>
<reference key="1">
    <citation type="submission" date="2006-08" db="EMBL/GenBank/DDBJ databases">
        <title>Complete sequence of Shewanella sp. MR-4.</title>
        <authorList>
            <consortium name="US DOE Joint Genome Institute"/>
            <person name="Copeland A."/>
            <person name="Lucas S."/>
            <person name="Lapidus A."/>
            <person name="Barry K."/>
            <person name="Detter J.C."/>
            <person name="Glavina del Rio T."/>
            <person name="Hammon N."/>
            <person name="Israni S."/>
            <person name="Dalin E."/>
            <person name="Tice H."/>
            <person name="Pitluck S."/>
            <person name="Kiss H."/>
            <person name="Brettin T."/>
            <person name="Bruce D."/>
            <person name="Han C."/>
            <person name="Tapia R."/>
            <person name="Gilna P."/>
            <person name="Schmutz J."/>
            <person name="Larimer F."/>
            <person name="Land M."/>
            <person name="Hauser L."/>
            <person name="Kyrpides N."/>
            <person name="Mikhailova N."/>
            <person name="Nealson K."/>
            <person name="Konstantinidis K."/>
            <person name="Klappenbach J."/>
            <person name="Tiedje J."/>
            <person name="Richardson P."/>
        </authorList>
    </citation>
    <scope>NUCLEOTIDE SEQUENCE [LARGE SCALE GENOMIC DNA]</scope>
    <source>
        <strain>MR-4</strain>
    </source>
</reference>
<dbReference type="EC" id="5.2.1.8" evidence="1"/>
<dbReference type="EMBL" id="CP000446">
    <property type="protein sequence ID" value="ABI39567.1"/>
    <property type="molecule type" value="Genomic_DNA"/>
</dbReference>
<dbReference type="RefSeq" id="WP_011623248.1">
    <property type="nucleotide sequence ID" value="NC_008321.1"/>
</dbReference>
<dbReference type="SMR" id="Q0HHA0"/>
<dbReference type="KEGG" id="she:Shewmr4_2496"/>
<dbReference type="HOGENOM" id="CLU_033058_2_0_6"/>
<dbReference type="GO" id="GO:0005737">
    <property type="term" value="C:cytoplasm"/>
    <property type="evidence" value="ECO:0007669"/>
    <property type="project" value="UniProtKB-SubCell"/>
</dbReference>
<dbReference type="GO" id="GO:0003755">
    <property type="term" value="F:peptidyl-prolyl cis-trans isomerase activity"/>
    <property type="evidence" value="ECO:0007669"/>
    <property type="project" value="UniProtKB-UniRule"/>
</dbReference>
<dbReference type="GO" id="GO:0044183">
    <property type="term" value="F:protein folding chaperone"/>
    <property type="evidence" value="ECO:0007669"/>
    <property type="project" value="TreeGrafter"/>
</dbReference>
<dbReference type="GO" id="GO:0043022">
    <property type="term" value="F:ribosome binding"/>
    <property type="evidence" value="ECO:0007669"/>
    <property type="project" value="TreeGrafter"/>
</dbReference>
<dbReference type="GO" id="GO:0051083">
    <property type="term" value="P:'de novo' cotranslational protein folding"/>
    <property type="evidence" value="ECO:0007669"/>
    <property type="project" value="TreeGrafter"/>
</dbReference>
<dbReference type="GO" id="GO:0051301">
    <property type="term" value="P:cell division"/>
    <property type="evidence" value="ECO:0007669"/>
    <property type="project" value="UniProtKB-KW"/>
</dbReference>
<dbReference type="GO" id="GO:0061077">
    <property type="term" value="P:chaperone-mediated protein folding"/>
    <property type="evidence" value="ECO:0007669"/>
    <property type="project" value="TreeGrafter"/>
</dbReference>
<dbReference type="GO" id="GO:0015031">
    <property type="term" value="P:protein transport"/>
    <property type="evidence" value="ECO:0007669"/>
    <property type="project" value="UniProtKB-UniRule"/>
</dbReference>
<dbReference type="GO" id="GO:0043335">
    <property type="term" value="P:protein unfolding"/>
    <property type="evidence" value="ECO:0007669"/>
    <property type="project" value="TreeGrafter"/>
</dbReference>
<dbReference type="FunFam" id="3.10.50.40:FF:000001">
    <property type="entry name" value="Trigger factor"/>
    <property type="match status" value="1"/>
</dbReference>
<dbReference type="Gene3D" id="3.10.50.40">
    <property type="match status" value="1"/>
</dbReference>
<dbReference type="Gene3D" id="3.30.70.1050">
    <property type="entry name" value="Trigger factor ribosome-binding domain"/>
    <property type="match status" value="1"/>
</dbReference>
<dbReference type="Gene3D" id="1.10.3120.10">
    <property type="entry name" value="Trigger factor, C-terminal domain"/>
    <property type="match status" value="1"/>
</dbReference>
<dbReference type="HAMAP" id="MF_00303">
    <property type="entry name" value="Trigger_factor_Tig"/>
    <property type="match status" value="1"/>
</dbReference>
<dbReference type="InterPro" id="IPR046357">
    <property type="entry name" value="PPIase_dom_sf"/>
</dbReference>
<dbReference type="InterPro" id="IPR001179">
    <property type="entry name" value="PPIase_FKBP_dom"/>
</dbReference>
<dbReference type="InterPro" id="IPR005215">
    <property type="entry name" value="Trig_fac"/>
</dbReference>
<dbReference type="InterPro" id="IPR008880">
    <property type="entry name" value="Trigger_fac_C"/>
</dbReference>
<dbReference type="InterPro" id="IPR037041">
    <property type="entry name" value="Trigger_fac_C_sf"/>
</dbReference>
<dbReference type="InterPro" id="IPR008881">
    <property type="entry name" value="Trigger_fac_ribosome-bd_bac"/>
</dbReference>
<dbReference type="InterPro" id="IPR036611">
    <property type="entry name" value="Trigger_fac_ribosome-bd_sf"/>
</dbReference>
<dbReference type="InterPro" id="IPR027304">
    <property type="entry name" value="Trigger_fact/SurA_dom_sf"/>
</dbReference>
<dbReference type="NCBIfam" id="TIGR00115">
    <property type="entry name" value="tig"/>
    <property type="match status" value="1"/>
</dbReference>
<dbReference type="PANTHER" id="PTHR30560">
    <property type="entry name" value="TRIGGER FACTOR CHAPERONE AND PEPTIDYL-PROLYL CIS/TRANS ISOMERASE"/>
    <property type="match status" value="1"/>
</dbReference>
<dbReference type="PANTHER" id="PTHR30560:SF3">
    <property type="entry name" value="TRIGGER FACTOR-LIKE PROTEIN TIG, CHLOROPLASTIC"/>
    <property type="match status" value="1"/>
</dbReference>
<dbReference type="Pfam" id="PF00254">
    <property type="entry name" value="FKBP_C"/>
    <property type="match status" value="1"/>
</dbReference>
<dbReference type="Pfam" id="PF05698">
    <property type="entry name" value="Trigger_C"/>
    <property type="match status" value="1"/>
</dbReference>
<dbReference type="Pfam" id="PF05697">
    <property type="entry name" value="Trigger_N"/>
    <property type="match status" value="1"/>
</dbReference>
<dbReference type="PIRSF" id="PIRSF003095">
    <property type="entry name" value="Trigger_factor"/>
    <property type="match status" value="1"/>
</dbReference>
<dbReference type="SUPFAM" id="SSF54534">
    <property type="entry name" value="FKBP-like"/>
    <property type="match status" value="1"/>
</dbReference>
<dbReference type="SUPFAM" id="SSF109998">
    <property type="entry name" value="Triger factor/SurA peptide-binding domain-like"/>
    <property type="match status" value="1"/>
</dbReference>
<dbReference type="SUPFAM" id="SSF102735">
    <property type="entry name" value="Trigger factor ribosome-binding domain"/>
    <property type="match status" value="1"/>
</dbReference>
<dbReference type="PROSITE" id="PS50059">
    <property type="entry name" value="FKBP_PPIASE"/>
    <property type="match status" value="1"/>
</dbReference>
<accession>Q0HHA0</accession>
<evidence type="ECO:0000255" key="1">
    <source>
        <dbReference type="HAMAP-Rule" id="MF_00303"/>
    </source>
</evidence>
<proteinExistence type="inferred from homology"/>
<feature type="chain" id="PRO_1000022759" description="Trigger factor">
    <location>
        <begin position="1"/>
        <end position="434"/>
    </location>
</feature>
<feature type="domain" description="PPIase FKBP-type" evidence="1">
    <location>
        <begin position="160"/>
        <end position="245"/>
    </location>
</feature>